<gene>
    <name evidence="1" type="primary">ispF</name>
    <name type="ordered locus">PputGB1_1172</name>
</gene>
<name>ISPF_PSEPG</name>
<reference key="1">
    <citation type="submission" date="2008-01" db="EMBL/GenBank/DDBJ databases">
        <title>Complete sequence of Pseudomonas putida GB-1.</title>
        <authorList>
            <consortium name="US DOE Joint Genome Institute"/>
            <person name="Copeland A."/>
            <person name="Lucas S."/>
            <person name="Lapidus A."/>
            <person name="Barry K."/>
            <person name="Glavina del Rio T."/>
            <person name="Dalin E."/>
            <person name="Tice H."/>
            <person name="Pitluck S."/>
            <person name="Bruce D."/>
            <person name="Goodwin L."/>
            <person name="Chertkov O."/>
            <person name="Brettin T."/>
            <person name="Detter J.C."/>
            <person name="Han C."/>
            <person name="Kuske C.R."/>
            <person name="Schmutz J."/>
            <person name="Larimer F."/>
            <person name="Land M."/>
            <person name="Hauser L."/>
            <person name="Kyrpides N."/>
            <person name="Kim E."/>
            <person name="McCarthy J.K."/>
            <person name="Richardson P."/>
        </authorList>
    </citation>
    <scope>NUCLEOTIDE SEQUENCE [LARGE SCALE GENOMIC DNA]</scope>
    <source>
        <strain>GB-1</strain>
    </source>
</reference>
<evidence type="ECO:0000255" key="1">
    <source>
        <dbReference type="HAMAP-Rule" id="MF_00107"/>
    </source>
</evidence>
<dbReference type="EC" id="4.6.1.12" evidence="1"/>
<dbReference type="EMBL" id="CP000926">
    <property type="protein sequence ID" value="ABY97080.1"/>
    <property type="molecule type" value="Genomic_DNA"/>
</dbReference>
<dbReference type="RefSeq" id="WP_012270859.1">
    <property type="nucleotide sequence ID" value="NC_010322.1"/>
</dbReference>
<dbReference type="SMR" id="B0KSC5"/>
<dbReference type="KEGG" id="ppg:PputGB1_1172"/>
<dbReference type="eggNOG" id="COG0245">
    <property type="taxonomic scope" value="Bacteria"/>
</dbReference>
<dbReference type="HOGENOM" id="CLU_084630_2_0_6"/>
<dbReference type="UniPathway" id="UPA00056">
    <property type="reaction ID" value="UER00095"/>
</dbReference>
<dbReference type="Proteomes" id="UP000002157">
    <property type="component" value="Chromosome"/>
</dbReference>
<dbReference type="GO" id="GO:0008685">
    <property type="term" value="F:2-C-methyl-D-erythritol 2,4-cyclodiphosphate synthase activity"/>
    <property type="evidence" value="ECO:0007669"/>
    <property type="project" value="UniProtKB-UniRule"/>
</dbReference>
<dbReference type="GO" id="GO:0046872">
    <property type="term" value="F:metal ion binding"/>
    <property type="evidence" value="ECO:0007669"/>
    <property type="project" value="UniProtKB-KW"/>
</dbReference>
<dbReference type="GO" id="GO:0019288">
    <property type="term" value="P:isopentenyl diphosphate biosynthetic process, methylerythritol 4-phosphate pathway"/>
    <property type="evidence" value="ECO:0007669"/>
    <property type="project" value="UniProtKB-UniRule"/>
</dbReference>
<dbReference type="GO" id="GO:0016114">
    <property type="term" value="P:terpenoid biosynthetic process"/>
    <property type="evidence" value="ECO:0007669"/>
    <property type="project" value="InterPro"/>
</dbReference>
<dbReference type="CDD" id="cd00554">
    <property type="entry name" value="MECDP_synthase"/>
    <property type="match status" value="1"/>
</dbReference>
<dbReference type="FunFam" id="3.30.1330.50:FF:000001">
    <property type="entry name" value="2-C-methyl-D-erythritol 2,4-cyclodiphosphate synthase"/>
    <property type="match status" value="1"/>
</dbReference>
<dbReference type="Gene3D" id="3.30.1330.50">
    <property type="entry name" value="2-C-methyl-D-erythritol 2,4-cyclodiphosphate synthase"/>
    <property type="match status" value="1"/>
</dbReference>
<dbReference type="HAMAP" id="MF_00107">
    <property type="entry name" value="IspF"/>
    <property type="match status" value="1"/>
</dbReference>
<dbReference type="InterPro" id="IPR003526">
    <property type="entry name" value="MECDP_synthase"/>
</dbReference>
<dbReference type="InterPro" id="IPR020555">
    <property type="entry name" value="MECDP_synthase_CS"/>
</dbReference>
<dbReference type="InterPro" id="IPR036571">
    <property type="entry name" value="MECDP_synthase_sf"/>
</dbReference>
<dbReference type="NCBIfam" id="TIGR00151">
    <property type="entry name" value="ispF"/>
    <property type="match status" value="1"/>
</dbReference>
<dbReference type="PANTHER" id="PTHR43181">
    <property type="entry name" value="2-C-METHYL-D-ERYTHRITOL 2,4-CYCLODIPHOSPHATE SYNTHASE, CHLOROPLASTIC"/>
    <property type="match status" value="1"/>
</dbReference>
<dbReference type="PANTHER" id="PTHR43181:SF1">
    <property type="entry name" value="2-C-METHYL-D-ERYTHRITOL 2,4-CYCLODIPHOSPHATE SYNTHASE, CHLOROPLASTIC"/>
    <property type="match status" value="1"/>
</dbReference>
<dbReference type="Pfam" id="PF02542">
    <property type="entry name" value="YgbB"/>
    <property type="match status" value="1"/>
</dbReference>
<dbReference type="SUPFAM" id="SSF69765">
    <property type="entry name" value="IpsF-like"/>
    <property type="match status" value="1"/>
</dbReference>
<dbReference type="PROSITE" id="PS01350">
    <property type="entry name" value="ISPF"/>
    <property type="match status" value="1"/>
</dbReference>
<comment type="function">
    <text evidence="1">Involved in the biosynthesis of isopentenyl diphosphate (IPP) and dimethylallyl diphosphate (DMAPP), two major building blocks of isoprenoid compounds. Catalyzes the conversion of 4-diphosphocytidyl-2-C-methyl-D-erythritol 2-phosphate (CDP-ME2P) to 2-C-methyl-D-erythritol 2,4-cyclodiphosphate (ME-CPP) with a corresponding release of cytidine 5-monophosphate (CMP).</text>
</comment>
<comment type="catalytic activity">
    <reaction evidence="1">
        <text>4-CDP-2-C-methyl-D-erythritol 2-phosphate = 2-C-methyl-D-erythritol 2,4-cyclic diphosphate + CMP</text>
        <dbReference type="Rhea" id="RHEA:23864"/>
        <dbReference type="ChEBI" id="CHEBI:57919"/>
        <dbReference type="ChEBI" id="CHEBI:58483"/>
        <dbReference type="ChEBI" id="CHEBI:60377"/>
        <dbReference type="EC" id="4.6.1.12"/>
    </reaction>
</comment>
<comment type="cofactor">
    <cofactor evidence="1">
        <name>a divalent metal cation</name>
        <dbReference type="ChEBI" id="CHEBI:60240"/>
    </cofactor>
    <text evidence="1">Binds 1 divalent metal cation per subunit.</text>
</comment>
<comment type="pathway">
    <text evidence="1">Isoprenoid biosynthesis; isopentenyl diphosphate biosynthesis via DXP pathway; isopentenyl diphosphate from 1-deoxy-D-xylulose 5-phosphate: step 4/6.</text>
</comment>
<comment type="subunit">
    <text evidence="1">Homotrimer.</text>
</comment>
<comment type="similarity">
    <text evidence="1">Belongs to the IspF family.</text>
</comment>
<protein>
    <recommendedName>
        <fullName evidence="1">2-C-methyl-D-erythritol 2,4-cyclodiphosphate synthase</fullName>
        <shortName evidence="1">MECDP-synthase</shortName>
        <shortName evidence="1">MECPP-synthase</shortName>
        <shortName evidence="1">MECPS</shortName>
        <ecNumber evidence="1">4.6.1.12</ecNumber>
    </recommendedName>
</protein>
<keyword id="KW-0414">Isoprene biosynthesis</keyword>
<keyword id="KW-0456">Lyase</keyword>
<keyword id="KW-0479">Metal-binding</keyword>
<organism>
    <name type="scientific">Pseudomonas putida (strain GB-1)</name>
    <dbReference type="NCBI Taxonomy" id="76869"/>
    <lineage>
        <taxon>Bacteria</taxon>
        <taxon>Pseudomonadati</taxon>
        <taxon>Pseudomonadota</taxon>
        <taxon>Gammaproteobacteria</taxon>
        <taxon>Pseudomonadales</taxon>
        <taxon>Pseudomonadaceae</taxon>
        <taxon>Pseudomonas</taxon>
    </lineage>
</organism>
<feature type="chain" id="PRO_1000075918" description="2-C-methyl-D-erythritol 2,4-cyclodiphosphate synthase">
    <location>
        <begin position="1"/>
        <end position="157"/>
    </location>
</feature>
<feature type="binding site" evidence="1">
    <location>
        <begin position="8"/>
        <end position="10"/>
    </location>
    <ligand>
        <name>4-CDP-2-C-methyl-D-erythritol 2-phosphate</name>
        <dbReference type="ChEBI" id="CHEBI:57919"/>
    </ligand>
</feature>
<feature type="binding site" evidence="1">
    <location>
        <position position="8"/>
    </location>
    <ligand>
        <name>a divalent metal cation</name>
        <dbReference type="ChEBI" id="CHEBI:60240"/>
    </ligand>
</feature>
<feature type="binding site" evidence="1">
    <location>
        <position position="10"/>
    </location>
    <ligand>
        <name>a divalent metal cation</name>
        <dbReference type="ChEBI" id="CHEBI:60240"/>
    </ligand>
</feature>
<feature type="binding site" evidence="1">
    <location>
        <begin position="34"/>
        <end position="35"/>
    </location>
    <ligand>
        <name>4-CDP-2-C-methyl-D-erythritol 2-phosphate</name>
        <dbReference type="ChEBI" id="CHEBI:57919"/>
    </ligand>
</feature>
<feature type="binding site" evidence="1">
    <location>
        <position position="42"/>
    </location>
    <ligand>
        <name>a divalent metal cation</name>
        <dbReference type="ChEBI" id="CHEBI:60240"/>
    </ligand>
</feature>
<feature type="binding site" evidence="1">
    <location>
        <begin position="56"/>
        <end position="58"/>
    </location>
    <ligand>
        <name>4-CDP-2-C-methyl-D-erythritol 2-phosphate</name>
        <dbReference type="ChEBI" id="CHEBI:57919"/>
    </ligand>
</feature>
<feature type="binding site" evidence="1">
    <location>
        <begin position="61"/>
        <end position="65"/>
    </location>
    <ligand>
        <name>4-CDP-2-C-methyl-D-erythritol 2-phosphate</name>
        <dbReference type="ChEBI" id="CHEBI:57919"/>
    </ligand>
</feature>
<feature type="binding site" evidence="1">
    <location>
        <begin position="100"/>
        <end position="106"/>
    </location>
    <ligand>
        <name>4-CDP-2-C-methyl-D-erythritol 2-phosphate</name>
        <dbReference type="ChEBI" id="CHEBI:57919"/>
    </ligand>
</feature>
<feature type="binding site" evidence="1">
    <location>
        <begin position="132"/>
        <end position="135"/>
    </location>
    <ligand>
        <name>4-CDP-2-C-methyl-D-erythritol 2-phosphate</name>
        <dbReference type="ChEBI" id="CHEBI:57919"/>
    </ligand>
</feature>
<feature type="binding site" evidence="1">
    <location>
        <position position="139"/>
    </location>
    <ligand>
        <name>4-CDP-2-C-methyl-D-erythritol 2-phosphate</name>
        <dbReference type="ChEBI" id="CHEBI:57919"/>
    </ligand>
</feature>
<feature type="binding site" evidence="1">
    <location>
        <position position="142"/>
    </location>
    <ligand>
        <name>4-CDP-2-C-methyl-D-erythritol 2-phosphate</name>
        <dbReference type="ChEBI" id="CHEBI:57919"/>
    </ligand>
</feature>
<feature type="site" description="Transition state stabilizer" evidence="1">
    <location>
        <position position="34"/>
    </location>
</feature>
<feature type="site" description="Transition state stabilizer" evidence="1">
    <location>
        <position position="133"/>
    </location>
</feature>
<proteinExistence type="inferred from homology"/>
<accession>B0KSC5</accession>
<sequence>MRIGHGYDVHRFCDGDFITLGGVRIPHKYGLLAHSDGDVLLHALSDALLGAAALGDIGKHFPDTDPQFKGADSRALLRHVVGIVRAKGWKVGNVDATIVAQAPKMAPHIETMRQLIAEDLQVELDQVNVKATTTEKLGFTGREEGIAVHSVALLLPA</sequence>